<dbReference type="EC" id="2.5.1.39" evidence="1"/>
<dbReference type="EMBL" id="CP001063">
    <property type="protein sequence ID" value="ACD09752.1"/>
    <property type="molecule type" value="Genomic_DNA"/>
</dbReference>
<dbReference type="RefSeq" id="WP_000455227.1">
    <property type="nucleotide sequence ID" value="NC_010658.1"/>
</dbReference>
<dbReference type="SMR" id="B2TX76"/>
<dbReference type="STRING" id="344609.SbBS512_E4557"/>
<dbReference type="GeneID" id="93777791"/>
<dbReference type="KEGG" id="sbc:SbBS512_E4557"/>
<dbReference type="HOGENOM" id="CLU_034879_1_0_6"/>
<dbReference type="UniPathway" id="UPA00232"/>
<dbReference type="Proteomes" id="UP000001030">
    <property type="component" value="Chromosome"/>
</dbReference>
<dbReference type="GO" id="GO:0005886">
    <property type="term" value="C:plasma membrane"/>
    <property type="evidence" value="ECO:0007669"/>
    <property type="project" value="UniProtKB-SubCell"/>
</dbReference>
<dbReference type="GO" id="GO:0008412">
    <property type="term" value="F:4-hydroxybenzoate polyprenyltransferase activity"/>
    <property type="evidence" value="ECO:0007669"/>
    <property type="project" value="UniProtKB-UniRule"/>
</dbReference>
<dbReference type="GO" id="GO:0006744">
    <property type="term" value="P:ubiquinone biosynthetic process"/>
    <property type="evidence" value="ECO:0007669"/>
    <property type="project" value="UniProtKB-UniRule"/>
</dbReference>
<dbReference type="CDD" id="cd13959">
    <property type="entry name" value="PT_UbiA_COQ2"/>
    <property type="match status" value="1"/>
</dbReference>
<dbReference type="FunFam" id="1.10.357.140:FF:000002">
    <property type="entry name" value="4-hydroxybenzoate octaprenyltransferase"/>
    <property type="match status" value="1"/>
</dbReference>
<dbReference type="FunFam" id="1.20.120.1780:FF:000001">
    <property type="entry name" value="4-hydroxybenzoate octaprenyltransferase"/>
    <property type="match status" value="1"/>
</dbReference>
<dbReference type="Gene3D" id="1.10.357.140">
    <property type="entry name" value="UbiA prenyltransferase"/>
    <property type="match status" value="1"/>
</dbReference>
<dbReference type="Gene3D" id="1.20.120.1780">
    <property type="entry name" value="UbiA prenyltransferase"/>
    <property type="match status" value="1"/>
</dbReference>
<dbReference type="HAMAP" id="MF_01635">
    <property type="entry name" value="UbiA"/>
    <property type="match status" value="1"/>
</dbReference>
<dbReference type="InterPro" id="IPR006370">
    <property type="entry name" value="HB_polyprenyltransferase-like"/>
</dbReference>
<dbReference type="InterPro" id="IPR039653">
    <property type="entry name" value="Prenyltransferase"/>
</dbReference>
<dbReference type="InterPro" id="IPR000537">
    <property type="entry name" value="UbiA_prenyltransferase"/>
</dbReference>
<dbReference type="InterPro" id="IPR030470">
    <property type="entry name" value="UbiA_prenylTrfase_CS"/>
</dbReference>
<dbReference type="InterPro" id="IPR044878">
    <property type="entry name" value="UbiA_sf"/>
</dbReference>
<dbReference type="NCBIfam" id="TIGR01474">
    <property type="entry name" value="ubiA_proteo"/>
    <property type="match status" value="1"/>
</dbReference>
<dbReference type="PANTHER" id="PTHR11048:SF28">
    <property type="entry name" value="4-HYDROXYBENZOATE POLYPRENYLTRANSFERASE, MITOCHONDRIAL"/>
    <property type="match status" value="1"/>
</dbReference>
<dbReference type="PANTHER" id="PTHR11048">
    <property type="entry name" value="PRENYLTRANSFERASES"/>
    <property type="match status" value="1"/>
</dbReference>
<dbReference type="Pfam" id="PF01040">
    <property type="entry name" value="UbiA"/>
    <property type="match status" value="1"/>
</dbReference>
<dbReference type="PROSITE" id="PS00943">
    <property type="entry name" value="UBIA"/>
    <property type="match status" value="1"/>
</dbReference>
<organism>
    <name type="scientific">Shigella boydii serotype 18 (strain CDC 3083-94 / BS512)</name>
    <dbReference type="NCBI Taxonomy" id="344609"/>
    <lineage>
        <taxon>Bacteria</taxon>
        <taxon>Pseudomonadati</taxon>
        <taxon>Pseudomonadota</taxon>
        <taxon>Gammaproteobacteria</taxon>
        <taxon>Enterobacterales</taxon>
        <taxon>Enterobacteriaceae</taxon>
        <taxon>Shigella</taxon>
    </lineage>
</organism>
<comment type="function">
    <text evidence="1">Catalyzes the prenylation of para-hydroxybenzoate (PHB) with an all-trans polyprenyl group. Mediates the second step in the final reaction sequence of ubiquinone-8 (UQ-8) biosynthesis, which is the condensation of the polyisoprenoid side chain with PHB, generating the first membrane-bound Q intermediate 3-octaprenyl-4-hydroxybenzoate.</text>
</comment>
<comment type="catalytic activity">
    <reaction evidence="1">
        <text>all-trans-octaprenyl diphosphate + 4-hydroxybenzoate = 4-hydroxy-3-(all-trans-octaprenyl)benzoate + diphosphate</text>
        <dbReference type="Rhea" id="RHEA:27782"/>
        <dbReference type="ChEBI" id="CHEBI:1617"/>
        <dbReference type="ChEBI" id="CHEBI:17879"/>
        <dbReference type="ChEBI" id="CHEBI:33019"/>
        <dbReference type="ChEBI" id="CHEBI:57711"/>
        <dbReference type="EC" id="2.5.1.39"/>
    </reaction>
</comment>
<comment type="cofactor">
    <cofactor evidence="1">
        <name>Mg(2+)</name>
        <dbReference type="ChEBI" id="CHEBI:18420"/>
    </cofactor>
</comment>
<comment type="pathway">
    <text evidence="1">Cofactor biosynthesis; ubiquinone biosynthesis.</text>
</comment>
<comment type="subcellular location">
    <subcellularLocation>
        <location evidence="1">Cell inner membrane</location>
        <topology evidence="1">Multi-pass membrane protein</topology>
    </subcellularLocation>
</comment>
<comment type="similarity">
    <text evidence="1">Belongs to the UbiA prenyltransferase family.</text>
</comment>
<protein>
    <recommendedName>
        <fullName evidence="1">4-hydroxybenzoate octaprenyltransferase</fullName>
        <ecNumber evidence="1">2.5.1.39</ecNumber>
    </recommendedName>
    <alternativeName>
        <fullName evidence="1">4-HB polyprenyltransferase</fullName>
    </alternativeName>
</protein>
<proteinExistence type="inferred from homology"/>
<gene>
    <name evidence="1" type="primary">ubiA</name>
    <name type="ordered locus">SbBS512_E4557</name>
</gene>
<reference key="1">
    <citation type="submission" date="2008-05" db="EMBL/GenBank/DDBJ databases">
        <title>Complete sequence of Shigella boydii serotype 18 strain BS512.</title>
        <authorList>
            <person name="Rasko D.A."/>
            <person name="Rosovitz M."/>
            <person name="Maurelli A.T."/>
            <person name="Myers G."/>
            <person name="Seshadri R."/>
            <person name="Cer R."/>
            <person name="Jiang L."/>
            <person name="Ravel J."/>
            <person name="Sebastian Y."/>
        </authorList>
    </citation>
    <scope>NUCLEOTIDE SEQUENCE [LARGE SCALE GENOMIC DNA]</scope>
    <source>
        <strain>CDC 3083-94 / BS512</strain>
    </source>
</reference>
<feature type="chain" id="PRO_1000186693" description="4-hydroxybenzoate octaprenyltransferase">
    <location>
        <begin position="1"/>
        <end position="290"/>
    </location>
</feature>
<feature type="transmembrane region" description="Helical" evidence="1">
    <location>
        <begin position="23"/>
        <end position="43"/>
    </location>
</feature>
<feature type="transmembrane region" description="Helical" evidence="1">
    <location>
        <begin position="46"/>
        <end position="66"/>
    </location>
</feature>
<feature type="transmembrane region" description="Helical" evidence="1">
    <location>
        <begin position="99"/>
        <end position="119"/>
    </location>
</feature>
<feature type="transmembrane region" description="Helical" evidence="1">
    <location>
        <begin position="141"/>
        <end position="161"/>
    </location>
</feature>
<feature type="transmembrane region" description="Helical" evidence="1">
    <location>
        <begin position="163"/>
        <end position="183"/>
    </location>
</feature>
<feature type="transmembrane region" description="Helical" evidence="1">
    <location>
        <begin position="213"/>
        <end position="233"/>
    </location>
</feature>
<feature type="transmembrane region" description="Helical" evidence="1">
    <location>
        <begin position="234"/>
        <end position="254"/>
    </location>
</feature>
<feature type="transmembrane region" description="Helical" evidence="1">
    <location>
        <begin position="268"/>
        <end position="288"/>
    </location>
</feature>
<evidence type="ECO:0000255" key="1">
    <source>
        <dbReference type="HAMAP-Rule" id="MF_01635"/>
    </source>
</evidence>
<name>UBIA_SHIB3</name>
<sequence length="290" mass="32512">MEWSLTQNKLLAFHRLMRTDKPIGALLLLWPTLWALWVATPGVPQLWILAVFVAGVWLMRAAGCVVNDYADRKFDGHVKRTANRPLPSGAVTEKEARALFVVLVLISFLLVLTLNTMTILLSIAALALAWVYPFMKRYTHLPQVVLGAAFGWSIPMAFAAVSESVPLSCWLMFLANILWAVAYDTQYAMVDRDDDVKIGIKSTAILFGQYDKLIIGILQIGVLALMAIIGELNGLGWGYYWSILVAGALFVYQQKLIANREREACFKAFMNNNYVGLVLFLGLAMSYWHF</sequence>
<keyword id="KW-0997">Cell inner membrane</keyword>
<keyword id="KW-1003">Cell membrane</keyword>
<keyword id="KW-0460">Magnesium</keyword>
<keyword id="KW-0472">Membrane</keyword>
<keyword id="KW-1185">Reference proteome</keyword>
<keyword id="KW-0808">Transferase</keyword>
<keyword id="KW-0812">Transmembrane</keyword>
<keyword id="KW-1133">Transmembrane helix</keyword>
<keyword id="KW-0831">Ubiquinone biosynthesis</keyword>
<accession>B2TX76</accession>